<keyword id="KW-0007">Acetylation</keyword>
<keyword id="KW-0963">Cytoplasm</keyword>
<keyword id="KW-0342">GTP-binding</keyword>
<keyword id="KW-0396">Initiation factor</keyword>
<keyword id="KW-0547">Nucleotide-binding</keyword>
<keyword id="KW-0648">Protein biosynthesis</keyword>
<protein>
    <recommendedName>
        <fullName evidence="2">Translation initiation factor IF-2</fullName>
    </recommendedName>
</protein>
<accession>B1XGY0</accession>
<evidence type="ECO:0000250" key="1"/>
<evidence type="ECO:0000255" key="2">
    <source>
        <dbReference type="HAMAP-Rule" id="MF_00100"/>
    </source>
</evidence>
<evidence type="ECO:0000256" key="3">
    <source>
        <dbReference type="SAM" id="MobiDB-lite"/>
    </source>
</evidence>
<organism>
    <name type="scientific">Escherichia coli (strain K12 / DH10B)</name>
    <dbReference type="NCBI Taxonomy" id="316385"/>
    <lineage>
        <taxon>Bacteria</taxon>
        <taxon>Pseudomonadati</taxon>
        <taxon>Pseudomonadota</taxon>
        <taxon>Gammaproteobacteria</taxon>
        <taxon>Enterobacterales</taxon>
        <taxon>Enterobacteriaceae</taxon>
        <taxon>Escherichia</taxon>
    </lineage>
</organism>
<reference key="1">
    <citation type="journal article" date="2008" name="J. Bacteriol.">
        <title>The complete genome sequence of Escherichia coli DH10B: insights into the biology of a laboratory workhorse.</title>
        <authorList>
            <person name="Durfee T."/>
            <person name="Nelson R."/>
            <person name="Baldwin S."/>
            <person name="Plunkett G. III"/>
            <person name="Burland V."/>
            <person name="Mau B."/>
            <person name="Petrosino J.F."/>
            <person name="Qin X."/>
            <person name="Muzny D.M."/>
            <person name="Ayele M."/>
            <person name="Gibbs R.A."/>
            <person name="Csorgo B."/>
            <person name="Posfai G."/>
            <person name="Weinstock G.M."/>
            <person name="Blattner F.R."/>
        </authorList>
    </citation>
    <scope>NUCLEOTIDE SEQUENCE [LARGE SCALE GENOMIC DNA]</scope>
    <source>
        <strain>K12 / DH10B</strain>
    </source>
</reference>
<dbReference type="EMBL" id="CP000948">
    <property type="protein sequence ID" value="ACB04247.1"/>
    <property type="molecule type" value="Genomic_DNA"/>
</dbReference>
<dbReference type="RefSeq" id="WP_000133044.1">
    <property type="nucleotide sequence ID" value="NC_010473.1"/>
</dbReference>
<dbReference type="SMR" id="B1XGY0"/>
<dbReference type="GeneID" id="75206024"/>
<dbReference type="KEGG" id="ecd:ECDH10B_3342"/>
<dbReference type="HOGENOM" id="CLU_006301_6_3_6"/>
<dbReference type="GO" id="GO:0005829">
    <property type="term" value="C:cytosol"/>
    <property type="evidence" value="ECO:0007669"/>
    <property type="project" value="TreeGrafter"/>
</dbReference>
<dbReference type="GO" id="GO:0005525">
    <property type="term" value="F:GTP binding"/>
    <property type="evidence" value="ECO:0007669"/>
    <property type="project" value="UniProtKB-KW"/>
</dbReference>
<dbReference type="GO" id="GO:0003924">
    <property type="term" value="F:GTPase activity"/>
    <property type="evidence" value="ECO:0007669"/>
    <property type="project" value="UniProtKB-UniRule"/>
</dbReference>
<dbReference type="GO" id="GO:0097216">
    <property type="term" value="F:guanosine tetraphosphate binding"/>
    <property type="evidence" value="ECO:0007669"/>
    <property type="project" value="UniProtKB-ARBA"/>
</dbReference>
<dbReference type="GO" id="GO:0003743">
    <property type="term" value="F:translation initiation factor activity"/>
    <property type="evidence" value="ECO:0007669"/>
    <property type="project" value="UniProtKB-UniRule"/>
</dbReference>
<dbReference type="CDD" id="cd01887">
    <property type="entry name" value="IF2_eIF5B"/>
    <property type="match status" value="1"/>
</dbReference>
<dbReference type="CDD" id="cd03702">
    <property type="entry name" value="IF2_mtIF2_II"/>
    <property type="match status" value="1"/>
</dbReference>
<dbReference type="CDD" id="cd03692">
    <property type="entry name" value="mtIF2_IVc"/>
    <property type="match status" value="1"/>
</dbReference>
<dbReference type="FunFam" id="2.40.30.10:FF:000007">
    <property type="entry name" value="Translation initiation factor IF-2"/>
    <property type="match status" value="1"/>
</dbReference>
<dbReference type="FunFam" id="2.40.30.10:FF:000008">
    <property type="entry name" value="Translation initiation factor IF-2"/>
    <property type="match status" value="1"/>
</dbReference>
<dbReference type="FunFam" id="3.30.56.50:FF:000001">
    <property type="entry name" value="Translation initiation factor IF-2"/>
    <property type="match status" value="1"/>
</dbReference>
<dbReference type="FunFam" id="3.40.50.10050:FF:000001">
    <property type="entry name" value="Translation initiation factor IF-2"/>
    <property type="match status" value="1"/>
</dbReference>
<dbReference type="FunFam" id="3.40.50.300:FF:000019">
    <property type="entry name" value="Translation initiation factor IF-2"/>
    <property type="match status" value="1"/>
</dbReference>
<dbReference type="Gene3D" id="3.40.50.300">
    <property type="entry name" value="P-loop containing nucleotide triphosphate hydrolases"/>
    <property type="match status" value="1"/>
</dbReference>
<dbReference type="Gene3D" id="3.30.56.50">
    <property type="entry name" value="Putative DNA-binding domain, N-terminal subdomain of bacterial translation initiation factor IF2"/>
    <property type="match status" value="1"/>
</dbReference>
<dbReference type="Gene3D" id="2.40.30.10">
    <property type="entry name" value="Translation factors"/>
    <property type="match status" value="2"/>
</dbReference>
<dbReference type="Gene3D" id="3.40.50.10050">
    <property type="entry name" value="Translation initiation factor IF- 2, domain 3"/>
    <property type="match status" value="1"/>
</dbReference>
<dbReference type="HAMAP" id="MF_00100_B">
    <property type="entry name" value="IF_2_B"/>
    <property type="match status" value="1"/>
</dbReference>
<dbReference type="InterPro" id="IPR009061">
    <property type="entry name" value="DNA-bd_dom_put_sf"/>
</dbReference>
<dbReference type="InterPro" id="IPR053905">
    <property type="entry name" value="EF-G-like_DII"/>
</dbReference>
<dbReference type="InterPro" id="IPR004161">
    <property type="entry name" value="EFTu-like_2"/>
</dbReference>
<dbReference type="InterPro" id="IPR013575">
    <property type="entry name" value="IF2_assoc_dom_bac"/>
</dbReference>
<dbReference type="InterPro" id="IPR044145">
    <property type="entry name" value="IF2_II"/>
</dbReference>
<dbReference type="InterPro" id="IPR006847">
    <property type="entry name" value="IF2_N"/>
</dbReference>
<dbReference type="InterPro" id="IPR027417">
    <property type="entry name" value="P-loop_NTPase"/>
</dbReference>
<dbReference type="InterPro" id="IPR005225">
    <property type="entry name" value="Small_GTP-bd"/>
</dbReference>
<dbReference type="InterPro" id="IPR000795">
    <property type="entry name" value="T_Tr_GTP-bd_dom"/>
</dbReference>
<dbReference type="InterPro" id="IPR000178">
    <property type="entry name" value="TF_IF2_bacterial-like"/>
</dbReference>
<dbReference type="InterPro" id="IPR015760">
    <property type="entry name" value="TIF_IF2"/>
</dbReference>
<dbReference type="InterPro" id="IPR023115">
    <property type="entry name" value="TIF_IF2_dom3"/>
</dbReference>
<dbReference type="InterPro" id="IPR036925">
    <property type="entry name" value="TIF_IF2_dom3_sf"/>
</dbReference>
<dbReference type="InterPro" id="IPR009000">
    <property type="entry name" value="Transl_B-barrel_sf"/>
</dbReference>
<dbReference type="NCBIfam" id="TIGR00487">
    <property type="entry name" value="IF-2"/>
    <property type="match status" value="1"/>
</dbReference>
<dbReference type="NCBIfam" id="TIGR00231">
    <property type="entry name" value="small_GTP"/>
    <property type="match status" value="1"/>
</dbReference>
<dbReference type="PANTHER" id="PTHR43381:SF5">
    <property type="entry name" value="TR-TYPE G DOMAIN-CONTAINING PROTEIN"/>
    <property type="match status" value="1"/>
</dbReference>
<dbReference type="PANTHER" id="PTHR43381">
    <property type="entry name" value="TRANSLATION INITIATION FACTOR IF-2-RELATED"/>
    <property type="match status" value="1"/>
</dbReference>
<dbReference type="Pfam" id="PF22042">
    <property type="entry name" value="EF-G_D2"/>
    <property type="match status" value="1"/>
</dbReference>
<dbReference type="Pfam" id="PF00009">
    <property type="entry name" value="GTP_EFTU"/>
    <property type="match status" value="1"/>
</dbReference>
<dbReference type="Pfam" id="PF03144">
    <property type="entry name" value="GTP_EFTU_D2"/>
    <property type="match status" value="1"/>
</dbReference>
<dbReference type="Pfam" id="PF11987">
    <property type="entry name" value="IF-2"/>
    <property type="match status" value="1"/>
</dbReference>
<dbReference type="Pfam" id="PF08364">
    <property type="entry name" value="IF2_assoc"/>
    <property type="match status" value="1"/>
</dbReference>
<dbReference type="Pfam" id="PF04760">
    <property type="entry name" value="IF2_N"/>
    <property type="match status" value="2"/>
</dbReference>
<dbReference type="SUPFAM" id="SSF52156">
    <property type="entry name" value="Initiation factor IF2/eIF5b, domain 3"/>
    <property type="match status" value="1"/>
</dbReference>
<dbReference type="SUPFAM" id="SSF52540">
    <property type="entry name" value="P-loop containing nucleoside triphosphate hydrolases"/>
    <property type="match status" value="1"/>
</dbReference>
<dbReference type="SUPFAM" id="SSF46955">
    <property type="entry name" value="Putative DNA-binding domain"/>
    <property type="match status" value="1"/>
</dbReference>
<dbReference type="SUPFAM" id="SSF50447">
    <property type="entry name" value="Translation proteins"/>
    <property type="match status" value="2"/>
</dbReference>
<dbReference type="PROSITE" id="PS51722">
    <property type="entry name" value="G_TR_2"/>
    <property type="match status" value="1"/>
</dbReference>
<dbReference type="PROSITE" id="PS01176">
    <property type="entry name" value="IF2"/>
    <property type="match status" value="1"/>
</dbReference>
<gene>
    <name evidence="2" type="primary">infB</name>
    <name type="ordered locus">ECDH10B_3342</name>
</gene>
<comment type="function">
    <text evidence="2">One of the essential components for the initiation of protein synthesis. Protects formylmethionyl-tRNA from spontaneous hydrolysis and promotes its binding to the 30S ribosomal subunits. Also involved in the hydrolysis of GTP during the formation of the 70S ribosomal complex.</text>
</comment>
<comment type="subcellular location">
    <subcellularLocation>
        <location evidence="2">Cytoplasm</location>
    </subcellularLocation>
</comment>
<comment type="similarity">
    <text evidence="2">Belongs to the TRAFAC class translation factor GTPase superfamily. Classic translation factor GTPase family. IF-2 subfamily.</text>
</comment>
<proteinExistence type="inferred from homology"/>
<sequence length="890" mass="97350">MTDVTIKTLAAERQTSVERLVQQFADAGIRKSADDSVSAQEKQTLIDHLNQKNSGPDKLTLQRKTRSTLNIPGTGGKSKSVQIEVRKKRTFVKRDPQEAERLAAEEQAQREAEEQARREAEESAKREAQQKAEREAAEQAKREAAEQAKREAAEKDKVSNQQDDMTKNAQAEKARREQEAAELKRKAEEEARRKLEEEARRVAEEARRMAEENKWTDNAEPTEDSSDYHVTTSQHARQAEDESDREVEGGRGRGRNAKAARPKKGNKHAESKADREEARAAVRGGKGGKRKGSSLQQGFQKPAQAVNRDVVIGETITVGELANKMAVKGSQVIKAMMKLGAMATINQVIDQETAQLVAEEMGHKVILRRENELEEAVMSDRDTGAAAEPRAPVVTIMGHVDHGKTSLLDYIRSTKVASGEAGGITQHIGAYHVETENGMITFLDTPGHAAFTSMRARGAQATDIVVLVVAADDGVMPQTIEAIQHAKAAQVPVVVAVNKIDKPEADPDRVKNELSQYGILPEEWGGESQFVHVSAKAGTGIDELLDAILLQAEVLELKAVRKGMASGAVIESFLDKGRGPVATVLVREGTLHKGDIVLCGFEYGRVRAMRNELGQEVLEAGPSIPVEILGLSGVPAAGDEVTVVRDEKKAREVALYRQGKFREVKLARQQKSKLENMFANMTEGEVHEVNIVLKADVQGSVEAISDSLLKLSTDEVKVKIIGSGVGGITETDATLAAASNAILVGFNVRADASARKVIEAESLDLRYYSVIYNLIDEVKAAMSGMLSPELKQQIIGLAEVRDVFKSPKFGAIAGCMVTEGVVKRHNPIRVLRDNVVIYEGELESLRRFKDDVNEVRNGMECGIGVKNYNDVRTGDVIEVFEIIEIQRTIA</sequence>
<feature type="chain" id="PRO_1000093783" description="Translation initiation factor IF-2">
    <location>
        <begin position="1"/>
        <end position="890"/>
    </location>
</feature>
<feature type="domain" description="tr-type G">
    <location>
        <begin position="389"/>
        <end position="558"/>
    </location>
</feature>
<feature type="region of interest" description="Disordered" evidence="3">
    <location>
        <begin position="45"/>
        <end position="304"/>
    </location>
</feature>
<feature type="region of interest" description="G1" evidence="1">
    <location>
        <begin position="398"/>
        <end position="405"/>
    </location>
</feature>
<feature type="region of interest" description="G2" evidence="1">
    <location>
        <begin position="423"/>
        <end position="427"/>
    </location>
</feature>
<feature type="region of interest" description="G3" evidence="1">
    <location>
        <begin position="444"/>
        <end position="447"/>
    </location>
</feature>
<feature type="region of interest" description="G4" evidence="1">
    <location>
        <begin position="498"/>
        <end position="501"/>
    </location>
</feature>
<feature type="region of interest" description="G5" evidence="1">
    <location>
        <begin position="534"/>
        <end position="536"/>
    </location>
</feature>
<feature type="compositionally biased region" description="Polar residues" evidence="3">
    <location>
        <begin position="67"/>
        <end position="81"/>
    </location>
</feature>
<feature type="compositionally biased region" description="Basic and acidic residues" evidence="3">
    <location>
        <begin position="92"/>
        <end position="217"/>
    </location>
</feature>
<feature type="compositionally biased region" description="Basic residues" evidence="3">
    <location>
        <begin position="252"/>
        <end position="266"/>
    </location>
</feature>
<feature type="compositionally biased region" description="Basic and acidic residues" evidence="3">
    <location>
        <begin position="267"/>
        <end position="280"/>
    </location>
</feature>
<feature type="binding site" evidence="2">
    <location>
        <begin position="398"/>
        <end position="405"/>
    </location>
    <ligand>
        <name>GTP</name>
        <dbReference type="ChEBI" id="CHEBI:37565"/>
    </ligand>
</feature>
<feature type="binding site" evidence="2">
    <location>
        <begin position="444"/>
        <end position="448"/>
    </location>
    <ligand>
        <name>GTP</name>
        <dbReference type="ChEBI" id="CHEBI:37565"/>
    </ligand>
</feature>
<feature type="binding site" evidence="2">
    <location>
        <begin position="498"/>
        <end position="501"/>
    </location>
    <ligand>
        <name>GTP</name>
        <dbReference type="ChEBI" id="CHEBI:37565"/>
    </ligand>
</feature>
<feature type="modified residue" description="N6-acetyllysine" evidence="1">
    <location>
        <position position="808"/>
    </location>
</feature>
<name>IF2_ECODH</name>